<proteinExistence type="evidence at protein level"/>
<comment type="function">
    <text evidence="5 6 7 8 9">Probable non-functional open reading frame (ORF) of V region of the variable domain of immunoglobulin light chains (PubMed:24600447). Non-functional ORF generally cannot participate in the synthesis of a productive immunoglobulin chain due to altered V-(D)-J or switch recombination and/or splicing site (at mRNA level) and/or conserved amino acid change (protein level) (PubMed:9619395). Immunoglobulins, also known as antibodies, are membrane-bound or secreted glycoproteins produced by B lymphocytes. In the recognition phase of humoral immunity, the membrane-bound immunoglobulins serve as receptors which, upon binding of a specific antigen, trigger the clonal expansion and differentiation of B lymphocytes into immunoglobulins-secreting plasma cells. Secreted immunoglobulins mediate the effector phase of humoral immunity, which results in the elimination of bound antigens (PubMed:20176268, PubMed:22158414). The antigen binding site is formed by the variable domain of one heavy chain, together with that of its associated light chain. Thus, each immunoglobulin has two antigen binding sites with remarkable affinity for a particular antigen. The variable domains are assembled by a process called V-(D)-J rearrangement and can then be subjected to somatic hypermutations which, after exposure to antigen and selection, allow affinity maturation for a particular antigen (PubMed:17576170, PubMed:20176268).</text>
</comment>
<comment type="subunit">
    <text evidence="6">Immunoglobulins are composed of two identical heavy chains and two identical light chains; disulfide-linked.</text>
</comment>
<comment type="subcellular location">
    <subcellularLocation>
        <location evidence="6 7">Secreted</location>
    </subcellularLocation>
    <subcellularLocation>
        <location evidence="6 7">Cell membrane</location>
    </subcellularLocation>
</comment>
<comment type="polymorphism">
    <text evidence="11">There are several alleles. The sequence shown is that of IMGT allele IGLV1-50*01.</text>
</comment>
<comment type="caution">
    <text evidence="9 11">Most probably a non-functional protein that cannot participate in the synthesis of a productive immunoglobulin chain due to an unusual recombination signal (RS) sequence altering V-(D)-J recombination (PubMed:9619395).</text>
</comment>
<protein>
    <recommendedName>
        <fullName evidence="11">Probable non-functional immunoglobulin lambda variable 1-50</fullName>
    </recommendedName>
</protein>
<feature type="signal peptide" evidence="2">
    <location>
        <begin position="1"/>
        <end position="19"/>
    </location>
</feature>
<feature type="chain" id="PRO_5001705249" description="Probable non-functional immunoglobulin lambda variable 1-50" evidence="2">
    <location>
        <begin position="20"/>
        <end position="118"/>
    </location>
</feature>
<feature type="domain" description="Ig-like" evidence="3">
    <location>
        <begin position="20"/>
        <end position="118" status="greater than"/>
    </location>
</feature>
<feature type="region of interest" description="Framework-1" evidence="1">
    <location>
        <begin position="20"/>
        <end position="44"/>
    </location>
</feature>
<feature type="region of interest" description="Complementarity-determining-1" evidence="1">
    <location>
        <begin position="45"/>
        <end position="53"/>
    </location>
</feature>
<feature type="region of interest" description="Framework-2" evidence="1">
    <location>
        <begin position="54"/>
        <end position="70"/>
    </location>
</feature>
<feature type="region of interest" description="Complementarity-determining-2" evidence="1">
    <location>
        <begin position="71"/>
        <end position="73"/>
    </location>
</feature>
<feature type="region of interest" description="Framework-3" evidence="1">
    <location>
        <begin position="74"/>
        <end position="109"/>
    </location>
</feature>
<feature type="region of interest" description="Complementarity-determining-3" evidence="1">
    <location>
        <begin position="110"/>
        <end position="118" status="greater than"/>
    </location>
</feature>
<feature type="disulfide bond" evidence="3">
    <location>
        <begin position="41"/>
        <end position="109"/>
    </location>
</feature>
<feature type="non-terminal residue">
    <location>
        <position position="118"/>
    </location>
</feature>
<keyword id="KW-1064">Adaptive immunity</keyword>
<keyword id="KW-1003">Cell membrane</keyword>
<keyword id="KW-1015">Disulfide bond</keyword>
<keyword id="KW-0391">Immunity</keyword>
<keyword id="KW-1280">Immunoglobulin</keyword>
<keyword id="KW-0393">Immunoglobulin domain</keyword>
<keyword id="KW-0472">Membrane</keyword>
<keyword id="KW-1267">Proteomics identification</keyword>
<keyword id="KW-1185">Reference proteome</keyword>
<keyword id="KW-0964">Secreted</keyword>
<keyword id="KW-0732">Signal</keyword>
<dbReference type="EMBL" id="AC245060">
    <property type="status" value="NOT_ANNOTATED_CDS"/>
    <property type="molecule type" value="Genomic_DNA"/>
</dbReference>
<dbReference type="EMDB" id="EMD-12570"/>
<dbReference type="EMDB" id="EMD-4452"/>
<dbReference type="EMDB" id="EMD-9649"/>
<dbReference type="EMDB" id="EMD-9650"/>
<dbReference type="EMDB" id="EMD-9651"/>
<dbReference type="SMR" id="A0A075B6I6"/>
<dbReference type="FunCoup" id="A0A075B6I6">
    <property type="interactions" value="293"/>
</dbReference>
<dbReference type="BioMuta" id="IGLV1-50"/>
<dbReference type="MassIVE" id="A0A075B6I6"/>
<dbReference type="Ensembl" id="ENST00000390291.2">
    <property type="protein sequence ID" value="ENSP00000374826.2"/>
    <property type="gene ID" value="ENSG00000211645.2"/>
</dbReference>
<dbReference type="UCSC" id="uc062cbn.1">
    <property type="organism name" value="human"/>
</dbReference>
<dbReference type="AGR" id="HGNC:5881"/>
<dbReference type="GeneCards" id="IGLV1-50"/>
<dbReference type="HGNC" id="HGNC:5881">
    <property type="gene designation" value="IGLV1-50"/>
</dbReference>
<dbReference type="HPA" id="ENSG00000211645">
    <property type="expression patterns" value="Tissue enhanced (intestine, lymphoid tissue, stomach)"/>
</dbReference>
<dbReference type="neXtProt" id="NX_A0A075B6I6"/>
<dbReference type="VEuPathDB" id="HostDB:ENSG00000211645"/>
<dbReference type="GeneTree" id="ENSGT00940000154293"/>
<dbReference type="HOGENOM" id="CLU_077975_4_0_1"/>
<dbReference type="InParanoid" id="A0A075B6I6"/>
<dbReference type="OMA" id="EYYCATW"/>
<dbReference type="OrthoDB" id="9838202at2759"/>
<dbReference type="PAN-GO" id="A0A075B6I6">
    <property type="GO annotations" value="3 GO annotations based on evolutionary models"/>
</dbReference>
<dbReference type="PhylomeDB" id="A0A075B6I6"/>
<dbReference type="SignaLink" id="A0A075B6I6"/>
<dbReference type="PRO" id="PR:A0A075B6I6"/>
<dbReference type="Proteomes" id="UP000005640">
    <property type="component" value="Chromosome 22"/>
</dbReference>
<dbReference type="RNAct" id="A0A075B6I6">
    <property type="molecule type" value="protein"/>
</dbReference>
<dbReference type="Bgee" id="ENSG00000211645">
    <property type="expression patterns" value="Expressed in primordial germ cell in gonad and 89 other cell types or tissues"/>
</dbReference>
<dbReference type="GO" id="GO:0005576">
    <property type="term" value="C:extracellular region"/>
    <property type="evidence" value="ECO:0007669"/>
    <property type="project" value="UniProtKB-SubCell"/>
</dbReference>
<dbReference type="GO" id="GO:0019814">
    <property type="term" value="C:immunoglobulin complex"/>
    <property type="evidence" value="ECO:0000318"/>
    <property type="project" value="GO_Central"/>
</dbReference>
<dbReference type="GO" id="GO:0005886">
    <property type="term" value="C:plasma membrane"/>
    <property type="evidence" value="ECO:0007669"/>
    <property type="project" value="UniProtKB-SubCell"/>
</dbReference>
<dbReference type="GO" id="GO:0002250">
    <property type="term" value="P:adaptive immune response"/>
    <property type="evidence" value="ECO:0007669"/>
    <property type="project" value="UniProtKB-KW"/>
</dbReference>
<dbReference type="GO" id="GO:0006955">
    <property type="term" value="P:immune response"/>
    <property type="evidence" value="ECO:0000318"/>
    <property type="project" value="GO_Central"/>
</dbReference>
<dbReference type="FunFam" id="2.60.40.10:FF:000442">
    <property type="entry name" value="Immunoglobulin lambda variable 2-8"/>
    <property type="match status" value="1"/>
</dbReference>
<dbReference type="Gene3D" id="2.60.40.10">
    <property type="entry name" value="Immunoglobulins"/>
    <property type="match status" value="1"/>
</dbReference>
<dbReference type="InterPro" id="IPR007110">
    <property type="entry name" value="Ig-like_dom"/>
</dbReference>
<dbReference type="InterPro" id="IPR036179">
    <property type="entry name" value="Ig-like_dom_sf"/>
</dbReference>
<dbReference type="InterPro" id="IPR013783">
    <property type="entry name" value="Ig-like_fold"/>
</dbReference>
<dbReference type="InterPro" id="IPR003599">
    <property type="entry name" value="Ig_sub"/>
</dbReference>
<dbReference type="InterPro" id="IPR013106">
    <property type="entry name" value="Ig_V-set"/>
</dbReference>
<dbReference type="InterPro" id="IPR050150">
    <property type="entry name" value="IgV_Light_Chain"/>
</dbReference>
<dbReference type="PANTHER" id="PTHR23267">
    <property type="entry name" value="IMMUNOGLOBULIN LIGHT CHAIN"/>
    <property type="match status" value="1"/>
</dbReference>
<dbReference type="Pfam" id="PF07686">
    <property type="entry name" value="V-set"/>
    <property type="match status" value="1"/>
</dbReference>
<dbReference type="SMART" id="SM00409">
    <property type="entry name" value="IG"/>
    <property type="match status" value="1"/>
</dbReference>
<dbReference type="SMART" id="SM00406">
    <property type="entry name" value="IGv"/>
    <property type="match status" value="1"/>
</dbReference>
<dbReference type="SUPFAM" id="SSF48726">
    <property type="entry name" value="Immunoglobulin"/>
    <property type="match status" value="1"/>
</dbReference>
<dbReference type="PROSITE" id="PS50835">
    <property type="entry name" value="IG_LIKE"/>
    <property type="match status" value="1"/>
</dbReference>
<reference key="1">
    <citation type="journal article" date="1999" name="Nature">
        <title>The DNA sequence of human chromosome 22.</title>
        <authorList>
            <person name="Dunham I."/>
            <person name="Hunt A.R."/>
            <person name="Collins J.E."/>
            <person name="Bruskiewich R."/>
            <person name="Beare D.M."/>
            <person name="Clamp M."/>
            <person name="Smink L.J."/>
            <person name="Ainscough R."/>
            <person name="Almeida J.P."/>
            <person name="Babbage A.K."/>
            <person name="Bagguley C."/>
            <person name="Bailey J."/>
            <person name="Barlow K.F."/>
            <person name="Bates K.N."/>
            <person name="Beasley O.P."/>
            <person name="Bird C.P."/>
            <person name="Blakey S.E."/>
            <person name="Bridgeman A.M."/>
            <person name="Buck D."/>
            <person name="Burgess J."/>
            <person name="Burrill W.D."/>
            <person name="Burton J."/>
            <person name="Carder C."/>
            <person name="Carter N.P."/>
            <person name="Chen Y."/>
            <person name="Clark G."/>
            <person name="Clegg S.M."/>
            <person name="Cobley V.E."/>
            <person name="Cole C.G."/>
            <person name="Collier R.E."/>
            <person name="Connor R."/>
            <person name="Conroy D."/>
            <person name="Corby N.R."/>
            <person name="Coville G.J."/>
            <person name="Cox A.V."/>
            <person name="Davis J."/>
            <person name="Dawson E."/>
            <person name="Dhami P.D."/>
            <person name="Dockree C."/>
            <person name="Dodsworth S.J."/>
            <person name="Durbin R.M."/>
            <person name="Ellington A.G."/>
            <person name="Evans K.L."/>
            <person name="Fey J.M."/>
            <person name="Fleming K."/>
            <person name="French L."/>
            <person name="Garner A.A."/>
            <person name="Gilbert J.G.R."/>
            <person name="Goward M.E."/>
            <person name="Grafham D.V."/>
            <person name="Griffiths M.N.D."/>
            <person name="Hall C."/>
            <person name="Hall R.E."/>
            <person name="Hall-Tamlyn G."/>
            <person name="Heathcott R.W."/>
            <person name="Ho S."/>
            <person name="Holmes S."/>
            <person name="Hunt S.E."/>
            <person name="Jones M.C."/>
            <person name="Kershaw J."/>
            <person name="Kimberley A.M."/>
            <person name="King A."/>
            <person name="Laird G.K."/>
            <person name="Langford C.F."/>
            <person name="Leversha M.A."/>
            <person name="Lloyd C."/>
            <person name="Lloyd D.M."/>
            <person name="Martyn I.D."/>
            <person name="Mashreghi-Mohammadi M."/>
            <person name="Matthews L.H."/>
            <person name="Mccann O.T."/>
            <person name="Mcclay J."/>
            <person name="Mclaren S."/>
            <person name="McMurray A.A."/>
            <person name="Milne S.A."/>
            <person name="Mortimore B.J."/>
            <person name="Odell C.N."/>
            <person name="Pavitt R."/>
            <person name="Pearce A.V."/>
            <person name="Pearson D."/>
            <person name="Phillimore B.J.C.T."/>
            <person name="Phillips S.H."/>
            <person name="Plumb R.W."/>
            <person name="Ramsay H."/>
            <person name="Ramsey Y."/>
            <person name="Rogers L."/>
            <person name="Ross M.T."/>
            <person name="Scott C.E."/>
            <person name="Sehra H.K."/>
            <person name="Skuce C.D."/>
            <person name="Smalley S."/>
            <person name="Smith M.L."/>
            <person name="Soderlund C."/>
            <person name="Spragon L."/>
            <person name="Steward C.A."/>
            <person name="Sulston J.E."/>
            <person name="Swann R.M."/>
            <person name="Vaudin M."/>
            <person name="Wall M."/>
            <person name="Wallis J.M."/>
            <person name="Whiteley M.N."/>
            <person name="Willey D.L."/>
            <person name="Williams L."/>
            <person name="Williams S.A."/>
            <person name="Williamson H."/>
            <person name="Wilmer T.E."/>
            <person name="Wilming L."/>
            <person name="Wright C.L."/>
            <person name="Hubbard T."/>
            <person name="Bentley D.R."/>
            <person name="Beck S."/>
            <person name="Rogers J."/>
            <person name="Shimizu N."/>
            <person name="Minoshima S."/>
            <person name="Kawasaki K."/>
            <person name="Sasaki T."/>
            <person name="Asakawa S."/>
            <person name="Kudoh J."/>
            <person name="Shintani A."/>
            <person name="Shibuya K."/>
            <person name="Yoshizaki Y."/>
            <person name="Aoki N."/>
            <person name="Mitsuyama S."/>
            <person name="Roe B.A."/>
            <person name="Chen F."/>
            <person name="Chu L."/>
            <person name="Crabtree J."/>
            <person name="Deschamps S."/>
            <person name="Do A."/>
            <person name="Do T."/>
            <person name="Dorman A."/>
            <person name="Fang F."/>
            <person name="Fu Y."/>
            <person name="Hu P."/>
            <person name="Hua A."/>
            <person name="Kenton S."/>
            <person name="Lai H."/>
            <person name="Lao H.I."/>
            <person name="Lewis J."/>
            <person name="Lewis S."/>
            <person name="Lin S.-P."/>
            <person name="Loh P."/>
            <person name="Malaj E."/>
            <person name="Nguyen T."/>
            <person name="Pan H."/>
            <person name="Phan S."/>
            <person name="Qi S."/>
            <person name="Qian Y."/>
            <person name="Ray L."/>
            <person name="Ren Q."/>
            <person name="Shaull S."/>
            <person name="Sloan D."/>
            <person name="Song L."/>
            <person name="Wang Q."/>
            <person name="Wang Y."/>
            <person name="Wang Z."/>
            <person name="White J."/>
            <person name="Willingham D."/>
            <person name="Wu H."/>
            <person name="Yao Z."/>
            <person name="Zhan M."/>
            <person name="Zhang G."/>
            <person name="Chissoe S."/>
            <person name="Murray J."/>
            <person name="Miller N."/>
            <person name="Minx P."/>
            <person name="Fulton R."/>
            <person name="Johnson D."/>
            <person name="Bemis G."/>
            <person name="Bentley D."/>
            <person name="Bradshaw H."/>
            <person name="Bourne S."/>
            <person name="Cordes M."/>
            <person name="Du Z."/>
            <person name="Fulton L."/>
            <person name="Goela D."/>
            <person name="Graves T."/>
            <person name="Hawkins J."/>
            <person name="Hinds K."/>
            <person name="Kemp K."/>
            <person name="Latreille P."/>
            <person name="Layman D."/>
            <person name="Ozersky P."/>
            <person name="Rohlfing T."/>
            <person name="Scheet P."/>
            <person name="Walker C."/>
            <person name="Wamsley A."/>
            <person name="Wohldmann P."/>
            <person name="Pepin K."/>
            <person name="Nelson J."/>
            <person name="Korf I."/>
            <person name="Bedell J.A."/>
            <person name="Hillier L.W."/>
            <person name="Mardis E."/>
            <person name="Waterston R."/>
            <person name="Wilson R."/>
            <person name="Emanuel B.S."/>
            <person name="Shaikh T."/>
            <person name="Kurahashi H."/>
            <person name="Saitta S."/>
            <person name="Budarf M.L."/>
            <person name="McDermid H.E."/>
            <person name="Johnson A."/>
            <person name="Wong A.C.C."/>
            <person name="Morrow B.E."/>
            <person name="Edelmann L."/>
            <person name="Kim U.J."/>
            <person name="Shizuya H."/>
            <person name="Simon M.I."/>
            <person name="Dumanski J.P."/>
            <person name="Peyrard M."/>
            <person name="Kedra D."/>
            <person name="Seroussi E."/>
            <person name="Fransson I."/>
            <person name="Tapia I."/>
            <person name="Bruder C.E."/>
            <person name="O'Brien K.P."/>
            <person name="Wilkinson P."/>
            <person name="Bodenteich A."/>
            <person name="Hartman K."/>
            <person name="Hu X."/>
            <person name="Khan A.S."/>
            <person name="Lane L."/>
            <person name="Tilahun Y."/>
            <person name="Wright H."/>
        </authorList>
    </citation>
    <scope>NUCLEOTIDE SEQUENCE [LARGE SCALE GENOMIC DNA] (IMGT ALLELE IGLV1-50*01)</scope>
</reference>
<reference key="2">
    <citation type="journal article" date="1998" name="Exp. Clin. Immunogenet.">
        <title>IMGT (ImMunoGeneTics) locus on focus. A new section of Experimental and Clinical Immunogenetics.</title>
        <authorList>
            <person name="Lefranc M.P."/>
        </authorList>
    </citation>
    <scope>CHARACTERIZATION</scope>
</reference>
<reference key="3">
    <citation type="journal article" date="2001" name="Exp. Clin. Immunogenet.">
        <title>Nomenclature of the human immunoglobulin heavy (IGH) genes.</title>
        <authorList>
            <person name="Lefranc M.P."/>
        </authorList>
    </citation>
    <scope>NOMENCLATURE</scope>
</reference>
<reference key="4">
    <citation type="book" date="2001" name="The Immunoglobulin FactsBook.">
        <title>The Immunoglobulin FactsBook.</title>
        <editorList>
            <person name="Lefranc M.P."/>
            <person name="Lefranc G."/>
        </editorList>
        <authorList>
            <person name="Lefranc M.P."/>
            <person name="Lefranc G."/>
        </authorList>
    </citation>
    <scope>NOMENCLATURE</scope>
</reference>
<reference key="5">
    <citation type="journal article" date="2007" name="Annu. Rev. Genet.">
        <title>Immunoglobulin somatic hypermutation.</title>
        <authorList>
            <person name="Teng G."/>
            <person name="Papavasiliou F.N."/>
        </authorList>
    </citation>
    <scope>REVIEW ON SOMATIC HYPERMUTATION</scope>
</reference>
<reference key="6">
    <citation type="journal article" date="2010" name="J. Allergy Clin. Immunol.">
        <title>Structure and function of immunoglobulins.</title>
        <authorList>
            <person name="Schroeder H.W. Jr."/>
            <person name="Cavacini L."/>
        </authorList>
    </citation>
    <scope>REVIEW ON IMMUNOGLOBULINS</scope>
</reference>
<reference key="7">
    <citation type="journal article" date="2012" name="Nat. Rev. Immunol.">
        <title>Molecular programming of B cell memory.</title>
        <authorList>
            <person name="McHeyzer-Williams M."/>
            <person name="Okitsu S."/>
            <person name="Wang N."/>
            <person name="McHeyzer-Williams L."/>
        </authorList>
    </citation>
    <scope>REVIEW ON FUNCTION</scope>
</reference>
<reference key="8">
    <citation type="journal article" date="2014" name="Front. Immunol.">
        <title>Immunoglobulin and T Cell Receptor Genes: IMGT((R)) and the Birth and Rise of Immunoinformatics.</title>
        <authorList>
            <person name="Lefranc M.P."/>
        </authorList>
    </citation>
    <scope>NOMENCLATURE</scope>
</reference>
<organism>
    <name type="scientific">Homo sapiens</name>
    <name type="common">Human</name>
    <dbReference type="NCBI Taxonomy" id="9606"/>
    <lineage>
        <taxon>Eukaryota</taxon>
        <taxon>Metazoa</taxon>
        <taxon>Chordata</taxon>
        <taxon>Craniata</taxon>
        <taxon>Vertebrata</taxon>
        <taxon>Euteleostomi</taxon>
        <taxon>Mammalia</taxon>
        <taxon>Eutheria</taxon>
        <taxon>Euarchontoglires</taxon>
        <taxon>Primates</taxon>
        <taxon>Haplorrhini</taxon>
        <taxon>Catarrhini</taxon>
        <taxon>Hominidae</taxon>
        <taxon>Homo</taxon>
    </lineage>
</organism>
<evidence type="ECO:0000250" key="1">
    <source>
        <dbReference type="UniProtKB" id="P01721"/>
    </source>
</evidence>
<evidence type="ECO:0000255" key="2"/>
<evidence type="ECO:0000255" key="3">
    <source>
        <dbReference type="PROSITE-ProRule" id="PRU00114"/>
    </source>
</evidence>
<evidence type="ECO:0000303" key="4">
    <source>
    </source>
</evidence>
<evidence type="ECO:0000303" key="5">
    <source>
    </source>
</evidence>
<evidence type="ECO:0000303" key="6">
    <source>
    </source>
</evidence>
<evidence type="ECO:0000303" key="7">
    <source>
    </source>
</evidence>
<evidence type="ECO:0000303" key="8">
    <source>
    </source>
</evidence>
<evidence type="ECO:0000303" key="9">
    <source>
    </source>
</evidence>
<evidence type="ECO:0000303" key="10">
    <source ref="4"/>
</evidence>
<evidence type="ECO:0000305" key="11"/>
<evidence type="ECO:0000312" key="12">
    <source>
        <dbReference type="HGNC" id="HGNC:5881"/>
    </source>
</evidence>
<name>LV150_HUMAN</name>
<accession>A0A075B6I6</accession>
<sequence>MAWSSLLLTLLAHCTGSWAQSVLTQPPSVSGAPGQRVTISCTGSSSNIGAGYVVHWYQQLPGTAPKLLIYGNSNRPSGVPDQFSGSKSGTSASLAITGLQSEDEADYYCKAWDNSLNA</sequence>
<gene>
    <name evidence="4 10 12" type="primary">IGLV1-50</name>
</gene>